<feature type="signal peptide" evidence="5">
    <location>
        <begin position="1"/>
        <end position="18"/>
    </location>
</feature>
<feature type="chain" id="PRO_0000020085" description="Myocilin">
    <location>
        <begin position="19"/>
        <end position="491"/>
    </location>
</feature>
<feature type="chain" id="PRO_0000428741" description="Myocilin, N-terminal fragment" evidence="1">
    <location>
        <begin position="19"/>
        <end position="213"/>
    </location>
</feature>
<feature type="chain" id="PRO_0000428742" description="Myocilin, C-terminal fragment" evidence="1">
    <location>
        <begin position="214"/>
        <end position="491"/>
    </location>
</feature>
<feature type="domain" description="Olfactomedin-like" evidence="6">
    <location>
        <begin position="231"/>
        <end position="490"/>
    </location>
</feature>
<feature type="region of interest" description="Disordered" evidence="7">
    <location>
        <begin position="151"/>
        <end position="189"/>
    </location>
</feature>
<feature type="coiled-coil region" evidence="5">
    <location>
        <begin position="98"/>
        <end position="171"/>
    </location>
</feature>
<feature type="binding site" evidence="4">
    <location>
        <position position="367"/>
    </location>
    <ligand>
        <name>Ca(2+)</name>
        <dbReference type="ChEBI" id="CHEBI:29108"/>
    </ligand>
</feature>
<feature type="binding site" evidence="4">
    <location>
        <position position="415"/>
    </location>
    <ligand>
        <name>Ca(2+)</name>
        <dbReference type="ChEBI" id="CHEBI:29108"/>
    </ligand>
</feature>
<feature type="binding site" evidence="4">
    <location>
        <position position="416"/>
    </location>
    <ligand>
        <name>Ca(2+)</name>
        <dbReference type="ChEBI" id="CHEBI:29108"/>
    </ligand>
</feature>
<feature type="binding site" evidence="4">
    <location>
        <position position="464"/>
    </location>
    <ligand>
        <name>Ca(2+)</name>
        <dbReference type="ChEBI" id="CHEBI:29108"/>
    </ligand>
</feature>
<feature type="binding site" evidence="4">
    <location>
        <position position="465"/>
    </location>
    <ligand>
        <name>Ca(2+)</name>
        <dbReference type="ChEBI" id="CHEBI:29108"/>
    </ligand>
</feature>
<feature type="site" description="Cleavage; by CAPN2" evidence="1">
    <location>
        <begin position="213"/>
        <end position="214"/>
    </location>
</feature>
<feature type="glycosylation site" description="N-linked (GlcNAc...) asparagine" evidence="5">
    <location>
        <position position="43"/>
    </location>
</feature>
<feature type="disulfide bond" evidence="4 6">
    <location>
        <begin position="232"/>
        <end position="420"/>
    </location>
</feature>
<dbReference type="EMBL" id="AY190130">
    <property type="protein sequence ID" value="AAO40254.1"/>
    <property type="molecule type" value="Genomic_DNA"/>
</dbReference>
<dbReference type="EMBL" id="AY190128">
    <property type="protein sequence ID" value="AAO40254.1"/>
    <property type="status" value="JOINED"/>
    <property type="molecule type" value="Genomic_DNA"/>
</dbReference>
<dbReference type="EMBL" id="AY190129">
    <property type="protein sequence ID" value="AAO40254.1"/>
    <property type="status" value="JOINED"/>
    <property type="molecule type" value="Genomic_DNA"/>
</dbReference>
<dbReference type="SMR" id="Q863A3"/>
<dbReference type="STRING" id="9541.ENSMFAP00000028782"/>
<dbReference type="GlyCosmos" id="Q863A3">
    <property type="glycosylation" value="1 site, No reported glycans"/>
</dbReference>
<dbReference type="eggNOG" id="KOG3545">
    <property type="taxonomic scope" value="Eukaryota"/>
</dbReference>
<dbReference type="Proteomes" id="UP000233100">
    <property type="component" value="Unplaced"/>
</dbReference>
<dbReference type="GO" id="GO:0005929">
    <property type="term" value="C:cilium"/>
    <property type="evidence" value="ECO:0007669"/>
    <property type="project" value="UniProtKB-SubCell"/>
</dbReference>
<dbReference type="GO" id="GO:0062023">
    <property type="term" value="C:collagen-containing extracellular matrix"/>
    <property type="evidence" value="ECO:0000250"/>
    <property type="project" value="UniProtKB"/>
</dbReference>
<dbReference type="GO" id="GO:0031410">
    <property type="term" value="C:cytoplasmic vesicle"/>
    <property type="evidence" value="ECO:0000250"/>
    <property type="project" value="UniProtKB"/>
</dbReference>
<dbReference type="GO" id="GO:0005783">
    <property type="term" value="C:endoplasmic reticulum"/>
    <property type="evidence" value="ECO:0000250"/>
    <property type="project" value="UniProtKB"/>
</dbReference>
<dbReference type="GO" id="GO:0070062">
    <property type="term" value="C:extracellular exosome"/>
    <property type="evidence" value="ECO:0000250"/>
    <property type="project" value="UniProtKB"/>
</dbReference>
<dbReference type="GO" id="GO:0005794">
    <property type="term" value="C:Golgi apparatus"/>
    <property type="evidence" value="ECO:0000250"/>
    <property type="project" value="UniProtKB"/>
</dbReference>
<dbReference type="GO" id="GO:0005743">
    <property type="term" value="C:mitochondrial inner membrane"/>
    <property type="evidence" value="ECO:0000250"/>
    <property type="project" value="UniProtKB"/>
</dbReference>
<dbReference type="GO" id="GO:0005758">
    <property type="term" value="C:mitochondrial intermembrane space"/>
    <property type="evidence" value="ECO:0000250"/>
    <property type="project" value="UniProtKB"/>
</dbReference>
<dbReference type="GO" id="GO:0005741">
    <property type="term" value="C:mitochondrial outer membrane"/>
    <property type="evidence" value="ECO:0000250"/>
    <property type="project" value="UniProtKB"/>
</dbReference>
<dbReference type="GO" id="GO:0033268">
    <property type="term" value="C:node of Ranvier"/>
    <property type="evidence" value="ECO:0000250"/>
    <property type="project" value="UniProtKB"/>
</dbReference>
<dbReference type="GO" id="GO:0005791">
    <property type="term" value="C:rough endoplasmic reticulum"/>
    <property type="evidence" value="ECO:0007669"/>
    <property type="project" value="UniProtKB-SubCell"/>
</dbReference>
<dbReference type="GO" id="GO:0046872">
    <property type="term" value="F:metal ion binding"/>
    <property type="evidence" value="ECO:0007669"/>
    <property type="project" value="UniProtKB-KW"/>
</dbReference>
<dbReference type="GO" id="GO:0060348">
    <property type="term" value="P:bone development"/>
    <property type="evidence" value="ECO:0000250"/>
    <property type="project" value="UniProtKB"/>
</dbReference>
<dbReference type="GO" id="GO:0045162">
    <property type="term" value="P:clustering of voltage-gated sodium channels"/>
    <property type="evidence" value="ECO:0000250"/>
    <property type="project" value="UniProtKB"/>
</dbReference>
<dbReference type="GO" id="GO:0038133">
    <property type="term" value="P:ERBB2-ERBB3 signaling pathway"/>
    <property type="evidence" value="ECO:0000250"/>
    <property type="project" value="UniProtKB"/>
</dbReference>
<dbReference type="GO" id="GO:0022011">
    <property type="term" value="P:myelination in peripheral nervous system"/>
    <property type="evidence" value="ECO:0000250"/>
    <property type="project" value="UniProtKB"/>
</dbReference>
<dbReference type="GO" id="GO:0001953">
    <property type="term" value="P:negative regulation of cell-matrix adhesion"/>
    <property type="evidence" value="ECO:0000250"/>
    <property type="project" value="UniProtKB"/>
</dbReference>
<dbReference type="GO" id="GO:0035024">
    <property type="term" value="P:negative regulation of Rho protein signal transduction"/>
    <property type="evidence" value="ECO:0000250"/>
    <property type="project" value="UniProtKB"/>
</dbReference>
<dbReference type="GO" id="GO:0051497">
    <property type="term" value="P:negative regulation of stress fiber assembly"/>
    <property type="evidence" value="ECO:0000250"/>
    <property type="project" value="UniProtKB"/>
</dbReference>
<dbReference type="GO" id="GO:0031175">
    <property type="term" value="P:neuron projection development"/>
    <property type="evidence" value="ECO:0000250"/>
    <property type="project" value="UniProtKB"/>
</dbReference>
<dbReference type="GO" id="GO:0035567">
    <property type="term" value="P:non-canonical Wnt signaling pathway"/>
    <property type="evidence" value="ECO:0000250"/>
    <property type="project" value="UniProtKB"/>
</dbReference>
<dbReference type="GO" id="GO:0001649">
    <property type="term" value="P:osteoblast differentiation"/>
    <property type="evidence" value="ECO:0000250"/>
    <property type="project" value="UniProtKB"/>
</dbReference>
<dbReference type="GO" id="GO:0030335">
    <property type="term" value="P:positive regulation of cell migration"/>
    <property type="evidence" value="ECO:0000250"/>
    <property type="project" value="UniProtKB"/>
</dbReference>
<dbReference type="GO" id="GO:0051894">
    <property type="term" value="P:positive regulation of focal adhesion assembly"/>
    <property type="evidence" value="ECO:0000250"/>
    <property type="project" value="UniProtKB"/>
</dbReference>
<dbReference type="GO" id="GO:0051901">
    <property type="term" value="P:positive regulation of mitochondrial depolarization"/>
    <property type="evidence" value="ECO:0000250"/>
    <property type="project" value="UniProtKB"/>
</dbReference>
<dbReference type="GO" id="GO:0051897">
    <property type="term" value="P:positive regulation of phosphatidylinositol 3-kinase/protein kinase B signal transduction"/>
    <property type="evidence" value="ECO:0000250"/>
    <property type="project" value="UniProtKB"/>
</dbReference>
<dbReference type="GO" id="GO:0051496">
    <property type="term" value="P:positive regulation of stress fiber assembly"/>
    <property type="evidence" value="ECO:0000250"/>
    <property type="project" value="UniProtKB"/>
</dbReference>
<dbReference type="GO" id="GO:1900026">
    <property type="term" value="P:positive regulation of substrate adhesion-dependent cell spreading"/>
    <property type="evidence" value="ECO:0000250"/>
    <property type="project" value="UniProtKB"/>
</dbReference>
<dbReference type="GO" id="GO:0043408">
    <property type="term" value="P:regulation of MAPK cascade"/>
    <property type="evidence" value="ECO:0000250"/>
    <property type="project" value="UniProtKB"/>
</dbReference>
<dbReference type="GO" id="GO:0014734">
    <property type="term" value="P:skeletal muscle hypertrophy"/>
    <property type="evidence" value="ECO:0000250"/>
    <property type="project" value="UniProtKB"/>
</dbReference>
<dbReference type="InterPro" id="IPR003112">
    <property type="entry name" value="Olfac-like_dom"/>
</dbReference>
<dbReference type="InterPro" id="IPR050605">
    <property type="entry name" value="Olfactomedin-like_domain"/>
</dbReference>
<dbReference type="PANTHER" id="PTHR23192:SF33">
    <property type="entry name" value="MYOCILIN"/>
    <property type="match status" value="1"/>
</dbReference>
<dbReference type="PANTHER" id="PTHR23192">
    <property type="entry name" value="OLFACTOMEDIN-RELATED"/>
    <property type="match status" value="1"/>
</dbReference>
<dbReference type="Pfam" id="PF02191">
    <property type="entry name" value="OLF"/>
    <property type="match status" value="1"/>
</dbReference>
<dbReference type="SMART" id="SM00284">
    <property type="entry name" value="OLF"/>
    <property type="match status" value="1"/>
</dbReference>
<dbReference type="SUPFAM" id="SSF63825">
    <property type="entry name" value="YWTD domain"/>
    <property type="match status" value="1"/>
</dbReference>
<dbReference type="PROSITE" id="PS51132">
    <property type="entry name" value="OLF"/>
    <property type="match status" value="1"/>
</dbReference>
<keyword id="KW-0106">Calcium</keyword>
<keyword id="KW-0966">Cell projection</keyword>
<keyword id="KW-0969">Cilium</keyword>
<keyword id="KW-0175">Coiled coil</keyword>
<keyword id="KW-0968">Cytoplasmic vesicle</keyword>
<keyword id="KW-1015">Disulfide bond</keyword>
<keyword id="KW-0256">Endoplasmic reticulum</keyword>
<keyword id="KW-0272">Extracellular matrix</keyword>
<keyword id="KW-0325">Glycoprotein</keyword>
<keyword id="KW-0333">Golgi apparatus</keyword>
<keyword id="KW-0449">Lipoprotein</keyword>
<keyword id="KW-0472">Membrane</keyword>
<keyword id="KW-0479">Metal-binding</keyword>
<keyword id="KW-0496">Mitochondrion</keyword>
<keyword id="KW-0999">Mitochondrion inner membrane</keyword>
<keyword id="KW-1000">Mitochondrion outer membrane</keyword>
<keyword id="KW-0564">Palmitate</keyword>
<keyword id="KW-1185">Reference proteome</keyword>
<keyword id="KW-0964">Secreted</keyword>
<keyword id="KW-0732">Signal</keyword>
<gene>
    <name type="primary">MYOC</name>
    <name type="synonym">TIGR</name>
</gene>
<name>MYOC_MACFA</name>
<sequence>MPAVQLLLLACPVWDVGARTAQLRKANDRSGRCQYTFSVASPNESSCPEQSQAMSVIHNLQKDSSTQRLDLEATKARLSSLESLLHHQLTLDRAAGPQETPEGLQRELGTLRRERDQLETQTRELETAYSNLLRDKSVLEEEKKRLRQENENLARRLESSSQEVARLRRGQCPQTRDTARDVPPGSREVSTWNLDTLAFQELKSELTEVPASRILKESPSGHLQSREGDNGCGELVWVGEPLTLRTAETITGKYGVWMRDPKPTYPYTRETTWRIDTVGTDVRQVFEYDLISQFMQGYPSKVHILPRPLESTGAVVYSGNLYFQGAESRTVIRYELNTETVKAQKEIPGAGYHGQFPYSWGGYTDIDLAVDESGLWVIYSTDEAKGAIVLSKLNPENLELEQTWETNIRKQSVANAFIICGTLYTVSSYSSADATVNFAYDTGTGISKTLTIPFKNRYKYSSMIDYNPLEKKLFAWDNLNMVTYDIKLSKM</sequence>
<reference key="1">
    <citation type="journal article" date="2001" name="Invest. Ophthalmol. Vis. Sci.">
        <title>Evaluation of the myocilin (MYOC) glaucoma gene in monkey and human steroid-induced ocular hypertension.</title>
        <authorList>
            <person name="Fingert J.H."/>
            <person name="Clark A.F."/>
            <person name="Craig J.E."/>
            <person name="Alward W.L."/>
            <person name="Snibson G.R."/>
            <person name="McLaughlin M."/>
            <person name="Tuttle L."/>
            <person name="Mackey D.A."/>
            <person name="Sheffield V.C."/>
            <person name="Stone E.M."/>
        </authorList>
    </citation>
    <scope>NUCLEOTIDE SEQUENCE [GENOMIC DNA]</scope>
</reference>
<organism>
    <name type="scientific">Macaca fascicularis</name>
    <name type="common">Crab-eating macaque</name>
    <name type="synonym">Cynomolgus monkey</name>
    <dbReference type="NCBI Taxonomy" id="9541"/>
    <lineage>
        <taxon>Eukaryota</taxon>
        <taxon>Metazoa</taxon>
        <taxon>Chordata</taxon>
        <taxon>Craniata</taxon>
        <taxon>Vertebrata</taxon>
        <taxon>Euteleostomi</taxon>
        <taxon>Mammalia</taxon>
        <taxon>Eutheria</taxon>
        <taxon>Euarchontoglires</taxon>
        <taxon>Primates</taxon>
        <taxon>Haplorrhini</taxon>
        <taxon>Catarrhini</taxon>
        <taxon>Cercopithecidae</taxon>
        <taxon>Cercopithecinae</taxon>
        <taxon>Macaca</taxon>
    </lineage>
</organism>
<accession>Q863A3</accession>
<proteinExistence type="inferred from homology"/>
<evidence type="ECO:0000250" key="1"/>
<evidence type="ECO:0000250" key="2">
    <source>
        <dbReference type="UniProtKB" id="O70624"/>
    </source>
</evidence>
<evidence type="ECO:0000250" key="3">
    <source>
        <dbReference type="UniProtKB" id="Q2PT31"/>
    </source>
</evidence>
<evidence type="ECO:0000250" key="4">
    <source>
        <dbReference type="UniProtKB" id="Q99972"/>
    </source>
</evidence>
<evidence type="ECO:0000255" key="5"/>
<evidence type="ECO:0000255" key="6">
    <source>
        <dbReference type="PROSITE-ProRule" id="PRU00446"/>
    </source>
</evidence>
<evidence type="ECO:0000256" key="7">
    <source>
        <dbReference type="SAM" id="MobiDB-lite"/>
    </source>
</evidence>
<comment type="function">
    <text evidence="2 4">Secreted glycoprotein regulating the activation of different signaling pathways in adjacent cells to control different processes including cell adhesion, cell-matrix adhesion, cytoskeleton organization and cell migration. Promotes substrate adhesion, spreading and formation of focal contacts. Negatively regulates cell-matrix adhesion and stress fiber assembly through Rho protein signal transduction. Modulates the organization of actin cytoskeleton by stimulating the formation of stress fibers through interactions with components of Wnt signaling pathways. Promotes cell migration through activation of PTK2 and the downstream phosphatidylinositol 3-kinase signaling. Plays a role in bone formation and promotes osteoblast differentiation in a dose-dependent manner through mitogen-activated protein kinase signaling. Mediates myelination in the peripheral nervous system through ERBB2/ERBB3 signaling. Plays a role as a regulator of muscle hypertrophy through the components of dystrophin-associated protein complex. Involved in positive regulation of mitochondrial depolarization. Plays a role in neurite outgrowth. May participate in the obstruction of fluid outflow in the trabecular meshwork.</text>
</comment>
<comment type="subunit">
    <text evidence="2 4">Homodimer (via N-terminus). Can also form higher oligomers. Interacts with OLFM3, FN1, NRCAM, GLDN and NFASC. Interacts (via N-terminus) with MYL2. Interacts with SFRP1, FRZB, FZD7, FZD10, FZD1 and WIF1; regulates Wnt signaling (By similarity). Interacts with SNTA1; regulates muscle hypertrophy. Interacts with ERBB2 and ERBB3; activates ERBB2-ERBB3 signaling pathway. Interacts with SNCG; affects its secretion and its aggregation (By similarity).</text>
</comment>
<comment type="subcellular location">
    <subcellularLocation>
        <location evidence="4">Secreted</location>
    </subcellularLocation>
    <subcellularLocation>
        <location evidence="4">Golgi apparatus</location>
    </subcellularLocation>
    <subcellularLocation>
        <location evidence="4">Cytoplasmic vesicle</location>
    </subcellularLocation>
    <subcellularLocation>
        <location evidence="4">Secreted</location>
        <location evidence="4">Extracellular space</location>
    </subcellularLocation>
    <subcellularLocation>
        <location evidence="4">Secreted</location>
        <location evidence="4">Extracellular space</location>
        <location evidence="4">Extracellular matrix</location>
    </subcellularLocation>
    <subcellularLocation>
        <location evidence="4">Secreted</location>
        <location evidence="4">Extracellular exosome</location>
    </subcellularLocation>
    <subcellularLocation>
        <location evidence="4">Mitochondrion</location>
    </subcellularLocation>
    <subcellularLocation>
        <location evidence="4">Mitochondrion intermembrane space</location>
    </subcellularLocation>
    <subcellularLocation>
        <location evidence="4">Mitochondrion inner membrane</location>
    </subcellularLocation>
    <subcellularLocation>
        <location evidence="4">Mitochondrion outer membrane</location>
    </subcellularLocation>
    <subcellularLocation>
        <location evidence="4">Rough endoplasmic reticulum</location>
    </subcellularLocation>
    <subcellularLocation>
        <location evidence="4">Cell projection</location>
    </subcellularLocation>
    <subcellularLocation>
        <location evidence="4">Cell projection</location>
        <location evidence="4">Cilium</location>
    </subcellularLocation>
    <text evidence="4">Located preferentially in the ciliary rootlet and basal body of the connecting cilium of photoreceptor cells, and in the rough endoplasmic reticulum. It is only imported to mitochondria in the trabecular meshwork. Localizes to the Golgi apparatus in Schlemm's canal endothelial cells. Appears in the extracellular space of trabecular meshwork cells by an unconventional mechanism, likely associated with exosome-like vesicles. Localizes in trabecular meshwork extracellular matrix.</text>
</comment>
<comment type="subcellular location">
    <molecule>Myocilin, C-terminal fragment</molecule>
    <subcellularLocation>
        <location evidence="1">Secreted</location>
    </subcellularLocation>
</comment>
<comment type="subcellular location">
    <molecule>Myocilin, N-terminal fragment</molecule>
    <subcellularLocation>
        <location>Endoplasmic reticulum</location>
    </subcellularLocation>
    <text evidence="1">Remains retained in the endoplasmic reticulum.</text>
</comment>
<comment type="PTM">
    <text evidence="3">Palmitoylated.</text>
</comment>
<comment type="PTM">
    <text evidence="1">Undergoes a calcium-dependent proteolytic cleavage at Arg-213 by CAPN2 in the endoplasmic reticulum. The result is the production of two fragments, one of 35 kDa containing the C-terminal olfactomedin-like domain, and another of 20 kDa containing the N-terminal leucine zipper-like domain (By similarity).</text>
</comment>
<comment type="PTM">
    <text evidence="4">Glycosylated.</text>
</comment>
<protein>
    <recommendedName>
        <fullName>Myocilin</fullName>
    </recommendedName>
    <alternativeName>
        <fullName>Trabecular meshwork-induced glucocorticoid response protein</fullName>
    </alternativeName>
    <component>
        <recommendedName>
            <fullName>Myocilin, N-terminal fragment</fullName>
        </recommendedName>
        <alternativeName>
            <fullName>Myocilin 20 kDa N-terminal fragment</fullName>
        </alternativeName>
    </component>
    <component>
        <recommendedName>
            <fullName>Myocilin, C-terminal fragment</fullName>
        </recommendedName>
        <alternativeName>
            <fullName>Myocilin 35 kDa N-terminal fragment</fullName>
        </alternativeName>
    </component>
</protein>